<gene>
    <name type="primary">ireb2</name>
</gene>
<accession>A0JMA0</accession>
<reference key="1">
    <citation type="submission" date="2006-10" db="EMBL/GenBank/DDBJ databases">
        <authorList>
            <consortium name="NIH - Xenopus Gene Collection (XGC) project"/>
        </authorList>
    </citation>
    <scope>NUCLEOTIDE SEQUENCE [LARGE SCALE MRNA]</scope>
    <source>
        <strain>N6</strain>
        <tissue>Skeletal muscle</tissue>
    </source>
</reference>
<dbReference type="EMBL" id="BC125797">
    <property type="protein sequence ID" value="AAI25798.1"/>
    <property type="molecule type" value="mRNA"/>
</dbReference>
<dbReference type="RefSeq" id="NP_001072764.1">
    <property type="nucleotide sequence ID" value="NM_001079296.1"/>
</dbReference>
<dbReference type="SMR" id="A0JMA0"/>
<dbReference type="FunCoup" id="A0JMA0">
    <property type="interactions" value="1705"/>
</dbReference>
<dbReference type="STRING" id="8364.ENSXETP00000049275"/>
<dbReference type="DNASU" id="780221"/>
<dbReference type="GeneID" id="780221"/>
<dbReference type="KEGG" id="xtr:780221"/>
<dbReference type="AGR" id="Xenbase:XB-GENE-943197"/>
<dbReference type="CTD" id="3658"/>
<dbReference type="Xenbase" id="XB-GENE-943197">
    <property type="gene designation" value="ireb2"/>
</dbReference>
<dbReference type="InParanoid" id="A0JMA0"/>
<dbReference type="OMA" id="VYEPMFD"/>
<dbReference type="OrthoDB" id="2279155at2759"/>
<dbReference type="Reactome" id="R-XTR-917937">
    <property type="pathway name" value="Iron uptake and transport"/>
</dbReference>
<dbReference type="Proteomes" id="UP000008143">
    <property type="component" value="Chromosome 3"/>
</dbReference>
<dbReference type="GO" id="GO:0005737">
    <property type="term" value="C:cytoplasm"/>
    <property type="evidence" value="ECO:0007669"/>
    <property type="project" value="UniProtKB-SubCell"/>
</dbReference>
<dbReference type="GO" id="GO:0051539">
    <property type="term" value="F:4 iron, 4 sulfur cluster binding"/>
    <property type="evidence" value="ECO:0007669"/>
    <property type="project" value="UniProtKB-KW"/>
</dbReference>
<dbReference type="GO" id="GO:0030350">
    <property type="term" value="F:iron-responsive element binding"/>
    <property type="evidence" value="ECO:0007669"/>
    <property type="project" value="UniProtKB-ARBA"/>
</dbReference>
<dbReference type="GO" id="GO:0046872">
    <property type="term" value="F:metal ion binding"/>
    <property type="evidence" value="ECO:0007669"/>
    <property type="project" value="UniProtKB-KW"/>
</dbReference>
<dbReference type="GO" id="GO:0006879">
    <property type="term" value="P:intracellular iron ion homeostasis"/>
    <property type="evidence" value="ECO:0000250"/>
    <property type="project" value="UniProtKB"/>
</dbReference>
<dbReference type="CDD" id="cd01580">
    <property type="entry name" value="AcnA_IRP_Swivel"/>
    <property type="match status" value="1"/>
</dbReference>
<dbReference type="FunFam" id="3.30.499.10:FF:000005">
    <property type="entry name" value="cytoplasmic aconitate hydratase"/>
    <property type="match status" value="1"/>
</dbReference>
<dbReference type="FunFam" id="3.30.499.10:FF:000011">
    <property type="entry name" value="Iron-responsive element binding protein 2"/>
    <property type="match status" value="1"/>
</dbReference>
<dbReference type="FunFam" id="3.30.499.10:FF:000012">
    <property type="entry name" value="Iron-responsive element binding protein 2"/>
    <property type="match status" value="1"/>
</dbReference>
<dbReference type="FunFam" id="3.20.19.10:FF:000005">
    <property type="entry name" value="Iron-responsive element-binding protein 2"/>
    <property type="match status" value="1"/>
</dbReference>
<dbReference type="Gene3D" id="6.10.190.10">
    <property type="match status" value="1"/>
</dbReference>
<dbReference type="Gene3D" id="3.30.499.10">
    <property type="entry name" value="Aconitase, domain 3"/>
    <property type="match status" value="3"/>
</dbReference>
<dbReference type="Gene3D" id="3.20.19.10">
    <property type="entry name" value="Aconitase, domain 4"/>
    <property type="match status" value="1"/>
</dbReference>
<dbReference type="InterPro" id="IPR044137">
    <property type="entry name" value="AcnA_IRP_Swivel"/>
</dbReference>
<dbReference type="InterPro" id="IPR015931">
    <property type="entry name" value="Acnase/IPM_dHydase_lsu_aba_1/3"/>
</dbReference>
<dbReference type="InterPro" id="IPR001030">
    <property type="entry name" value="Acoase/IPM_deHydtase_lsu_aba"/>
</dbReference>
<dbReference type="InterPro" id="IPR015928">
    <property type="entry name" value="Aconitase/3IPM_dehydase_swvl"/>
</dbReference>
<dbReference type="InterPro" id="IPR006249">
    <property type="entry name" value="Aconitase/IRP2"/>
</dbReference>
<dbReference type="InterPro" id="IPR018136">
    <property type="entry name" value="Aconitase_4Fe-4S_BS"/>
</dbReference>
<dbReference type="InterPro" id="IPR036008">
    <property type="entry name" value="Aconitase_4Fe-4S_dom"/>
</dbReference>
<dbReference type="InterPro" id="IPR000573">
    <property type="entry name" value="AconitaseA/IPMdHydase_ssu_swvl"/>
</dbReference>
<dbReference type="NCBIfam" id="TIGR01341">
    <property type="entry name" value="aconitase_1"/>
    <property type="match status" value="1"/>
</dbReference>
<dbReference type="NCBIfam" id="NF006757">
    <property type="entry name" value="PRK09277.1"/>
    <property type="match status" value="1"/>
</dbReference>
<dbReference type="NCBIfam" id="NF009520">
    <property type="entry name" value="PRK12881.1"/>
    <property type="match status" value="1"/>
</dbReference>
<dbReference type="PANTHER" id="PTHR11670">
    <property type="entry name" value="ACONITASE/IRON-RESPONSIVE ELEMENT FAMILY MEMBER"/>
    <property type="match status" value="1"/>
</dbReference>
<dbReference type="Pfam" id="PF00330">
    <property type="entry name" value="Aconitase"/>
    <property type="match status" value="2"/>
</dbReference>
<dbReference type="Pfam" id="PF00694">
    <property type="entry name" value="Aconitase_C"/>
    <property type="match status" value="1"/>
</dbReference>
<dbReference type="PRINTS" id="PR00415">
    <property type="entry name" value="ACONITASE"/>
</dbReference>
<dbReference type="SUPFAM" id="SSF53732">
    <property type="entry name" value="Aconitase iron-sulfur domain"/>
    <property type="match status" value="1"/>
</dbReference>
<dbReference type="SUPFAM" id="SSF52016">
    <property type="entry name" value="LeuD/IlvD-like"/>
    <property type="match status" value="1"/>
</dbReference>
<dbReference type="PROSITE" id="PS00450">
    <property type="entry name" value="ACONITASE_1"/>
    <property type="match status" value="1"/>
</dbReference>
<proteinExistence type="evidence at transcript level"/>
<comment type="function">
    <text>RNA-binding protein that binds to iron-responsive elements (IRES), which are stem-loop structures found in the 5'-UTR of ferritin, and delta aminolevulinic acid synthase mRNAs, and in the 3'-UTR of transferrin receptor mRNA. Binding to the IRE element in ferritin results in the repression of its mRNA translation. Binding of the protein to the transferrin receptor mRNA inhibits the degradation of this otherwise rapidly degraded mRNA.</text>
</comment>
<comment type="cofactor">
    <cofactor evidence="1">
        <name>[4Fe-4S] cluster</name>
        <dbReference type="ChEBI" id="CHEBI:49883"/>
    </cofactor>
    <text evidence="1">Binds 1 [4Fe-4S] cluster per subunit. [4Fe-4S]-binding affects RNA-binding activity, thereby inhibiting activity of the protein.</text>
</comment>
<comment type="subcellular location">
    <subcellularLocation>
        <location evidence="1">Cytoplasm</location>
    </subcellularLocation>
</comment>
<comment type="PTM">
    <text evidence="1">Ubiquitinated and degraded by the proteasome in presence of high level of iron and oxygen.</text>
</comment>
<comment type="similarity">
    <text evidence="2">Belongs to the aconitase/IPM isomerase family.</text>
</comment>
<protein>
    <recommendedName>
        <fullName>Iron-responsive element-binding protein 2</fullName>
        <shortName>IRE-BP 2</shortName>
    </recommendedName>
</protein>
<feature type="chain" id="PRO_0000380118" description="Iron-responsive element-binding protein 2">
    <location>
        <begin position="1"/>
        <end position="957"/>
    </location>
</feature>
<feature type="binding site" evidence="1">
    <location>
        <position position="506"/>
    </location>
    <ligand>
        <name>[4Fe-4S] cluster</name>
        <dbReference type="ChEBI" id="CHEBI:49883"/>
    </ligand>
</feature>
<feature type="binding site" evidence="1">
    <location>
        <position position="572"/>
    </location>
    <ligand>
        <name>[4Fe-4S] cluster</name>
        <dbReference type="ChEBI" id="CHEBI:49883"/>
    </ligand>
</feature>
<feature type="binding site" evidence="1">
    <location>
        <position position="575"/>
    </location>
    <ligand>
        <name>[4Fe-4S] cluster</name>
        <dbReference type="ChEBI" id="CHEBI:49883"/>
    </ligand>
</feature>
<name>IREB2_XENTR</name>
<evidence type="ECO:0000250" key="1"/>
<evidence type="ECO:0000305" key="2"/>
<keyword id="KW-0004">4Fe-4S</keyword>
<keyword id="KW-0963">Cytoplasm</keyword>
<keyword id="KW-0408">Iron</keyword>
<keyword id="KW-0411">Iron-sulfur</keyword>
<keyword id="KW-0479">Metal-binding</keyword>
<keyword id="KW-0597">Phosphoprotein</keyword>
<keyword id="KW-1185">Reference proteome</keyword>
<keyword id="KW-0694">RNA-binding</keyword>
<keyword id="KW-0832">Ubl conjugation</keyword>
<organism>
    <name type="scientific">Xenopus tropicalis</name>
    <name type="common">Western clawed frog</name>
    <name type="synonym">Silurana tropicalis</name>
    <dbReference type="NCBI Taxonomy" id="8364"/>
    <lineage>
        <taxon>Eukaryota</taxon>
        <taxon>Metazoa</taxon>
        <taxon>Chordata</taxon>
        <taxon>Craniata</taxon>
        <taxon>Vertebrata</taxon>
        <taxon>Euteleostomi</taxon>
        <taxon>Amphibia</taxon>
        <taxon>Batrachia</taxon>
        <taxon>Anura</taxon>
        <taxon>Pipoidea</taxon>
        <taxon>Pipidae</taxon>
        <taxon>Xenopodinae</taxon>
        <taxon>Xenopus</taxon>
        <taxon>Silurana</taxon>
    </lineage>
</organism>
<sequence>MTENPFHYLVEPLSGTSDKTFFNVSKLKATEYDSLPYCIRVVLEAVVRNCDGVLVKEQDAFNILNWKATCEFKEIPFLPARVMLQDFTGIPAMVDFAAMRDAISKFGRDPKQVNPACPTDLIADHSLQLDFTKCIVAQNVSSVPTVETHKPTTKQSPGKTLGRKAQCRSQSGCKGACELGAAHGSSREQIENTPMLCPFHLQPIAEPEAALKSLEIEFNRNKERLQFFKWCTKAFHNVAVIPPETGTVHQVNLEFLSRVVMEEKGFIYPDSVLGTDSHTTMVNGLGILGLGVGGIESEAAMLGVPITLTLPEVIGCELTGAINPLATSIDVVLSITKHLKQAGVAGTFVEFFGNGVSQLSVADRTTIANMCPEYGATVAFFPVDSVTLRHLKQTGVDVQSVSTFETYLQAVKLLRQENVQQPEYSKVLQINLNSIVPYVSGPKRPQDRISVMDMKKDFEACLNEKTGLKGFQIPEKKQSIMVPVTYENSEYSLSHGCVVIAAVTSCTNNCNPSVMLTAGLLAKKAVEAGLTVKPYIKTSLSPGSGTVTYYLSASGVLPYLSKLGFDIIGYGCARCVGNTNPLPESIVTAIKEGELVACGVFSGNKHFEGNRCSCVCANYLASPPLVVAYALAGTVNIDLQTEALGENAQGEKIFLRDIWPSREEVLEVEETMVIPSMFSELKLKIEKQNTRWNLLDAPESTLFPWDLRSTFIRSPPFFHKLEKIPPPIQPIEKAHVLLYLGDSVTTDHMSPAGSIPRTSPAAKYLIQKNLIPREFNSYGARRGNDAVMTRGTFANMKLFNKLVGKTGPKTFHLPSGQIMDVFDAAELYQKAEIPLIIIAGKKYGLGNSRDWAAKGPFLLGVRVVIAESYEKIHKDHLVGMGIAPLQFLSGENAETLGLSAKEQYSFSLPVDLTPRHKIEVKTNTGKTFHVIAAFDNEAEVTFYKHGGILSYVARKYL</sequence>